<evidence type="ECO:0000250" key="1"/>
<evidence type="ECO:0000250" key="2">
    <source>
        <dbReference type="UniProtKB" id="Q9EPX0"/>
    </source>
</evidence>
<evidence type="ECO:0000250" key="3">
    <source>
        <dbReference type="UniProtKB" id="Q9JK92"/>
    </source>
</evidence>
<evidence type="ECO:0000250" key="4">
    <source>
        <dbReference type="UniProtKB" id="Q9UJY1"/>
    </source>
</evidence>
<evidence type="ECO:0000255" key="5">
    <source>
        <dbReference type="PROSITE-ProRule" id="PRU00285"/>
    </source>
</evidence>
<evidence type="ECO:0000256" key="6">
    <source>
        <dbReference type="SAM" id="MobiDB-lite"/>
    </source>
</evidence>
<accession>Q6SJQ8</accession>
<reference key="1">
    <citation type="submission" date="2003-11" db="EMBL/GenBank/DDBJ databases">
        <title>Cloning and expression of protein kinase H11 gene in Rhesus monkey (Macaca mulatta) uterine endometrium.</title>
        <authorList>
            <person name="Li F.-X."/>
            <person name="Sun X.-Y."/>
            <person name="Liu J."/>
            <person name="Tang S."/>
            <person name="Wang Y.-L."/>
        </authorList>
    </citation>
    <scope>NUCLEOTIDE SEQUENCE [MRNA]</scope>
</reference>
<gene>
    <name type="primary">HSPB8</name>
</gene>
<name>HSPB8_MACMU</name>
<comment type="function">
    <text evidence="3">Involved in the chaperone-assisted selective autophagy (CASA), a crucial process for protein quality control, particularly in mechanical strained cells and tissues such as muscle. Displays temperature-dependent chaperone activity.</text>
</comment>
<comment type="subunit">
    <text evidence="3 4">Monomer (By similarity). Forms a ternary complex with BAG3 and HSPA1A (By similarity). Component of the chaperone-assisted selective autophagy (CASA) complex consisting of BAG3, HSPA8/HSC70, HSPB8 and STUB1/CHIP (By similarity). Interacts with HSPB1 (By similarity). Interacts with DNAJB6 (By similarity). Interacts with BAG3 (By similarity).</text>
</comment>
<comment type="subcellular location">
    <subcellularLocation>
        <location evidence="4">Cytoplasm</location>
    </subcellularLocation>
    <subcellularLocation>
        <location evidence="4">Nucleus</location>
    </subcellularLocation>
    <text evidence="4">Translocates to nuclear foci during heat shock.</text>
</comment>
<comment type="PTM">
    <text evidence="1">Phosphorylated.</text>
</comment>
<comment type="similarity">
    <text evidence="5">Belongs to the small heat shock protein (HSP20) family.</text>
</comment>
<organism>
    <name type="scientific">Macaca mulatta</name>
    <name type="common">Rhesus macaque</name>
    <dbReference type="NCBI Taxonomy" id="9544"/>
    <lineage>
        <taxon>Eukaryota</taxon>
        <taxon>Metazoa</taxon>
        <taxon>Chordata</taxon>
        <taxon>Craniata</taxon>
        <taxon>Vertebrata</taxon>
        <taxon>Euteleostomi</taxon>
        <taxon>Mammalia</taxon>
        <taxon>Eutheria</taxon>
        <taxon>Euarchontoglires</taxon>
        <taxon>Primates</taxon>
        <taxon>Haplorrhini</taxon>
        <taxon>Catarrhini</taxon>
        <taxon>Cercopithecidae</taxon>
        <taxon>Cercopithecinae</taxon>
        <taxon>Macaca</taxon>
    </lineage>
</organism>
<feature type="chain" id="PRO_0000125946" description="Heat shock protein beta-8">
    <location>
        <begin position="1"/>
        <end position="195"/>
    </location>
</feature>
<feature type="domain" description="sHSP" evidence="5">
    <location>
        <begin position="73"/>
        <end position="184"/>
    </location>
</feature>
<feature type="region of interest" description="Disordered" evidence="6">
    <location>
        <begin position="175"/>
        <end position="195"/>
    </location>
</feature>
<feature type="compositionally biased region" description="Polar residues" evidence="6">
    <location>
        <begin position="176"/>
        <end position="195"/>
    </location>
</feature>
<feature type="modified residue" description="Phosphoserine" evidence="2">
    <location>
        <position position="56"/>
    </location>
</feature>
<feature type="modified residue" description="Phosphothreonine" evidence="4">
    <location>
        <position position="62"/>
    </location>
</feature>
<feature type="modified residue" description="Asymmetric dimethylarginine" evidence="3">
    <location>
        <position position="70"/>
    </location>
</feature>
<feature type="modified residue" description="Asymmetric dimethylarginine" evidence="3">
    <location>
        <position position="77"/>
    </location>
</feature>
<protein>
    <recommendedName>
        <fullName>Heat shock protein beta-8</fullName>
        <shortName>HspB8</shortName>
    </recommendedName>
    <alternativeName>
        <fullName>Protein kinase H11</fullName>
    </alternativeName>
</protein>
<keyword id="KW-0143">Chaperone</keyword>
<keyword id="KW-0963">Cytoplasm</keyword>
<keyword id="KW-0488">Methylation</keyword>
<keyword id="KW-0539">Nucleus</keyword>
<keyword id="KW-0597">Phosphoprotein</keyword>
<keyword id="KW-1185">Reference proteome</keyword>
<keyword id="KW-0346">Stress response</keyword>
<proteinExistence type="evidence at transcript level"/>
<sequence>MADGQMPFSCHYPSRLRRDPSGLSLSSRLLDDGFGMDPFPDDLTASWPDWALPRLSSAWPGTLRSGMVPRGPTATARFGVPAEGRTPPPFPGEPWKVCVNVHSFKPEELMVKIKDGYVEVSGKHEEKQQEGGIVSKNFTKKIQLPAEVDPVTVFASLSPEGLLIIEAPQVPPYSTFGESSFNNELPQDSQEVTCT</sequence>
<dbReference type="EMBL" id="AY457046">
    <property type="protein sequence ID" value="AAR20447.1"/>
    <property type="molecule type" value="mRNA"/>
</dbReference>
<dbReference type="RefSeq" id="NP_001028109.1">
    <property type="nucleotide sequence ID" value="NM_001032937.1"/>
</dbReference>
<dbReference type="SMR" id="Q6SJQ8"/>
<dbReference type="STRING" id="9544.ENSMMUP00000027956"/>
<dbReference type="PaxDb" id="9544-ENSMMUP00000027956"/>
<dbReference type="GeneID" id="574341"/>
<dbReference type="KEGG" id="mcc:574341"/>
<dbReference type="CTD" id="26353"/>
<dbReference type="eggNOG" id="KOG3591">
    <property type="taxonomic scope" value="Eukaryota"/>
</dbReference>
<dbReference type="InParanoid" id="Q6SJQ8"/>
<dbReference type="OrthoDB" id="10060792at2759"/>
<dbReference type="Proteomes" id="UP000006718">
    <property type="component" value="Unassembled WGS sequence"/>
</dbReference>
<dbReference type="GO" id="GO:0005737">
    <property type="term" value="C:cytoplasm"/>
    <property type="evidence" value="ECO:0000250"/>
    <property type="project" value="UniProtKB"/>
</dbReference>
<dbReference type="GO" id="GO:0005634">
    <property type="term" value="C:nucleus"/>
    <property type="evidence" value="ECO:0000250"/>
    <property type="project" value="UniProtKB"/>
</dbReference>
<dbReference type="GO" id="GO:0101031">
    <property type="term" value="C:protein folding chaperone complex"/>
    <property type="evidence" value="ECO:0000318"/>
    <property type="project" value="GO_Central"/>
</dbReference>
<dbReference type="GO" id="GO:0042803">
    <property type="term" value="F:protein homodimerization activity"/>
    <property type="evidence" value="ECO:0007669"/>
    <property type="project" value="InterPro"/>
</dbReference>
<dbReference type="GO" id="GO:0034620">
    <property type="term" value="P:cellular response to unfolded protein"/>
    <property type="evidence" value="ECO:0000318"/>
    <property type="project" value="GO_Central"/>
</dbReference>
<dbReference type="CDD" id="cd06480">
    <property type="entry name" value="ACD_HspB8_like"/>
    <property type="match status" value="1"/>
</dbReference>
<dbReference type="FunFam" id="2.60.40.790:FF:000028">
    <property type="entry name" value="Heat shock protein beta-8"/>
    <property type="match status" value="1"/>
</dbReference>
<dbReference type="Gene3D" id="2.60.40.790">
    <property type="match status" value="1"/>
</dbReference>
<dbReference type="InterPro" id="IPR002068">
    <property type="entry name" value="A-crystallin/Hsp20_dom"/>
</dbReference>
<dbReference type="InterPro" id="IPR001436">
    <property type="entry name" value="Alpha-crystallin/sHSP_animal"/>
</dbReference>
<dbReference type="InterPro" id="IPR008978">
    <property type="entry name" value="HSP20-like_chaperone"/>
</dbReference>
<dbReference type="InterPro" id="IPR043254">
    <property type="entry name" value="HSPB8"/>
</dbReference>
<dbReference type="InterPro" id="IPR042790">
    <property type="entry name" value="HspB8_ACD"/>
</dbReference>
<dbReference type="PANTHER" id="PTHR46906">
    <property type="entry name" value="HEAT SHOCK PROTEIN BETA-8"/>
    <property type="match status" value="1"/>
</dbReference>
<dbReference type="PANTHER" id="PTHR46906:SF1">
    <property type="entry name" value="HEAT SHOCK PROTEIN BETA-8"/>
    <property type="match status" value="1"/>
</dbReference>
<dbReference type="Pfam" id="PF00011">
    <property type="entry name" value="HSP20"/>
    <property type="match status" value="1"/>
</dbReference>
<dbReference type="PRINTS" id="PR00299">
    <property type="entry name" value="ACRYSTALLIN"/>
</dbReference>
<dbReference type="SUPFAM" id="SSF49764">
    <property type="entry name" value="HSP20-like chaperones"/>
    <property type="match status" value="1"/>
</dbReference>
<dbReference type="PROSITE" id="PS01031">
    <property type="entry name" value="SHSP"/>
    <property type="match status" value="1"/>
</dbReference>